<organism>
    <name type="scientific">Reston ebolavirus (strain Siena/Philippine-92)</name>
    <name type="common">REBOV</name>
    <name type="synonym">Reston Ebola virus</name>
    <dbReference type="NCBI Taxonomy" id="129004"/>
    <lineage>
        <taxon>Viruses</taxon>
        <taxon>Riboviria</taxon>
        <taxon>Orthornavirae</taxon>
        <taxon>Negarnaviricota</taxon>
        <taxon>Haploviricotina</taxon>
        <taxon>Monjiviricetes</taxon>
        <taxon>Mononegavirales</taxon>
        <taxon>Filoviridae</taxon>
        <taxon>Orthoebolavirus</taxon>
        <taxon>Orthoebolavirus restonense</taxon>
        <taxon>Reston ebolavirus</taxon>
    </lineage>
</organism>
<reference key="1">
    <citation type="journal article" date="1996" name="Proc. Natl. Acad. Sci. U.S.A.">
        <title>The virion glycoproteins of Ebola viruses are encoded in two reading frames and are expressed through transcriptional editing.</title>
        <authorList>
            <person name="Sanchez A."/>
            <person name="Trappier S.G."/>
            <person name="Mahy B.W.J."/>
            <person name="Peters C.J."/>
            <person name="Nichol S.T."/>
        </authorList>
    </citation>
    <scope>NUCLEOTIDE SEQUENCE [GENOMIC RNA]</scope>
    <scope>RNA EDITING</scope>
</reference>
<protein>
    <recommendedName>
        <fullName>Pre-small/secreted glycoprotein</fullName>
        <shortName>pre-sGP</shortName>
    </recommendedName>
    <component>
        <recommendedName>
            <fullName>Small/secreted glycoprotein</fullName>
            <shortName>sGP</shortName>
        </recommendedName>
    </component>
    <component>
        <recommendedName>
            <fullName>Delta-peptide</fullName>
        </recommendedName>
    </component>
</protein>
<evidence type="ECO:0000250" key="1"/>
<evidence type="ECO:0000250" key="2">
    <source>
        <dbReference type="UniProtKB" id="P60170"/>
    </source>
</evidence>
<evidence type="ECO:0000255" key="3"/>
<evidence type="ECO:0000269" key="4">
    <source>
    </source>
</evidence>
<evidence type="ECO:0000305" key="5"/>
<feature type="signal peptide" evidence="3">
    <location>
        <begin position="1"/>
        <end position="33"/>
    </location>
</feature>
<feature type="chain" id="PRO_0000037500" description="Pre-small/secreted glycoprotein" evidence="1">
    <location>
        <begin position="34"/>
        <end position="367"/>
    </location>
</feature>
<feature type="chain" id="PRO_0000037501" description="Small/secreted glycoprotein" evidence="1">
    <location>
        <begin position="34"/>
        <end position="325"/>
    </location>
</feature>
<feature type="chain" id="PRO_0000037502" description="Delta-peptide" evidence="1">
    <location>
        <begin position="326"/>
        <end position="367"/>
    </location>
</feature>
<feature type="site" description="Cleavage; by host furin" evidence="1">
    <location>
        <begin position="325"/>
        <end position="326"/>
    </location>
</feature>
<feature type="glycosylation site" description="N-linked (GlcNAc...) asparagine; by host" evidence="3">
    <location>
        <position position="41"/>
    </location>
</feature>
<feature type="glycosylation site" description="N-linked (GlcNAc...) asparagine; by host" evidence="3">
    <location>
        <position position="205"/>
    </location>
</feature>
<feature type="glycosylation site" description="N-linked (GlcNAc...) asparagine; by host" evidence="3">
    <location>
        <position position="239"/>
    </location>
</feature>
<feature type="glycosylation site" description="N-linked (GlcNAc...) asparagine; by host" evidence="3">
    <location>
        <position position="258"/>
    </location>
</feature>
<feature type="glycosylation site" description="N-linked (GlcNAc...) asparagine; by host" evidence="3">
    <location>
        <position position="269"/>
    </location>
</feature>
<feature type="disulfide bond" description="Interchain" evidence="1">
    <location>
        <position position="54"/>
    </location>
</feature>
<feature type="disulfide bond" evidence="1">
    <location>
        <begin position="109"/>
        <end position="136"/>
    </location>
</feature>
<feature type="disulfide bond" evidence="1">
    <location>
        <begin position="122"/>
        <end position="148"/>
    </location>
</feature>
<feature type="disulfide bond" description="Interchain" evidence="1">
    <location>
        <position position="307"/>
    </location>
</feature>
<organismHost>
    <name type="scientific">Homo sapiens</name>
    <name type="common">Human</name>
    <dbReference type="NCBI Taxonomy" id="9606"/>
</organismHost>
<organismHost>
    <name type="scientific">Macaca fascicularis</name>
    <name type="common">Crab-eating macaque</name>
    <name type="synonym">Cynomolgus monkey</name>
    <dbReference type="NCBI Taxonomy" id="9541"/>
</organismHost>
<organismHost>
    <name type="scientific">Pteropodinae</name>
    <dbReference type="NCBI Taxonomy" id="77225"/>
</organismHost>
<organismHost>
    <name type="scientific">Sus scrofa</name>
    <name type="common">Pig</name>
    <dbReference type="NCBI Taxonomy" id="9823"/>
</organismHost>
<gene>
    <name type="primary">GP</name>
</gene>
<sequence>MGSGYQLLQLPRERFRKTSFLVWVIILFQRAISMPLGIVTNSTLKATEIDQLVCRDKLSSTSQLKSVGLNLEGNGIATDVPSATKRWGFRSGVPPKVVSYEAGEWAENCYNLEIKKSDGSECLPLPPDGVRGFPRCRYVHKVQGTGPCPGDLAFHKNGAFFLYDRLASTVIYRGTTFTEGVVAFLILSEPKKHFWKATPAHEPVNTTDDSTSYYMTLTLSYEMSNFGGKESNTLFKVDNHTYVQLDRPHTPQFLVQLNETLRRNNRLSNSTGRLTWTLDPKIEPDVGEWAFWETKKTFPNNFMEKTCISKFYQPTPTTPQIRARRELSKEKLATTHPPTTPSWFQRIPLQWFQCSLQDGQRKCRPKV</sequence>
<accession>Q89569</accession>
<name>VSGP_EBORS</name>
<comment type="function">
    <molecule>Small/secreted glycoprotein</molecule>
    <text evidence="2">Seems to possess an anti-inflammatory activity as it can reverse the barrier-decreasing effects of TNF alpha. Might therefore contribute to the lack of inflammatory reaction seen during infection in spite the of extensive necrosis and massive virus production. Does not seem to be involved in activation of primary macrophages. Does not seem to interact specifically with neutrophils.</text>
</comment>
<comment type="function">
    <molecule>Delta-peptide</molecule>
    <text evidence="2">Viroporin that permeabilizes mammalian cell plasma membranes. It acts by altering permeation of ionic compounds and small molecules. This activity may lead to viral enterotoxic activity.</text>
</comment>
<comment type="subunit">
    <molecule>Small/secreted glycoprotein</molecule>
    <text evidence="2">Homodimer; disulfide-linked (By similarity). The homodimers are linked by two disulfide bonds in a parallel orientation (By similarity).</text>
</comment>
<comment type="subunit">
    <molecule>Delta-peptide</molecule>
    <text>Monomer.</text>
</comment>
<comment type="subcellular location">
    <molecule>Small/secreted glycoprotein</molecule>
    <subcellularLocation>
        <location evidence="2">Secreted</location>
    </subcellularLocation>
</comment>
<comment type="subcellular location">
    <molecule>Delta-peptide</molecule>
    <subcellularLocation>
        <location evidence="2">Secreted</location>
    </subcellularLocation>
</comment>
<comment type="PTM">
    <molecule>Pre-small/secreted glycoprotein</molecule>
    <text evidence="2">This precursor is processed into mature sGP and delta-peptide by host furin or furin-like proteases. The cleavage site corresponds to the furin optimal cleavage sequence [KR]-X-[KR]-R.</text>
</comment>
<comment type="PTM">
    <molecule>Small/secreted glycoprotein</molecule>
    <text evidence="2">N-glycosylated.</text>
</comment>
<comment type="PTM">
    <molecule>Delta-peptide</molecule>
    <text evidence="2">O-glycosylated.</text>
</comment>
<comment type="RNA editing">
    <location>
        <position position="296" evidence="4"/>
    </location>
    <text>Partially edited. RNA editing at this position consists of an insertion of one adenine nucleotide. The sequence displayed here is the small secreted glycoprotein, derived from the unedited RNA. The edited RNA gives rise to the full-length transmembrane glycoprotein (AC Q89853).</text>
</comment>
<comment type="similarity">
    <text evidence="5">Belongs to the filoviruses glycoprotein family.</text>
</comment>
<dbReference type="EMBL" id="U23416">
    <property type="protein sequence ID" value="AAC54888.1"/>
    <property type="molecule type" value="Genomic_RNA"/>
</dbReference>
<dbReference type="EMBL" id="U23417">
    <property type="protein sequence ID" value="AAC54890.1"/>
    <property type="molecule type" value="Genomic_RNA"/>
</dbReference>
<dbReference type="SMR" id="Q89569"/>
<dbReference type="GlyCosmos" id="Q89569">
    <property type="glycosylation" value="5 sites, No reported glycans"/>
</dbReference>
<dbReference type="GO" id="GO:0005576">
    <property type="term" value="C:extracellular region"/>
    <property type="evidence" value="ECO:0007669"/>
    <property type="project" value="UniProtKB-SubCell"/>
</dbReference>
<dbReference type="GO" id="GO:0033644">
    <property type="term" value="C:host cell membrane"/>
    <property type="evidence" value="ECO:0007669"/>
    <property type="project" value="UniProtKB-KW"/>
</dbReference>
<dbReference type="GO" id="GO:0015267">
    <property type="term" value="F:channel activity"/>
    <property type="evidence" value="ECO:0007669"/>
    <property type="project" value="UniProtKB-KW"/>
</dbReference>
<dbReference type="GO" id="GO:0034220">
    <property type="term" value="P:monoatomic ion transmembrane transport"/>
    <property type="evidence" value="ECO:0007669"/>
    <property type="project" value="UniProtKB-KW"/>
</dbReference>
<dbReference type="InterPro" id="IPR014625">
    <property type="entry name" value="GPC_FiloV"/>
</dbReference>
<dbReference type="InterPro" id="IPR002561">
    <property type="entry name" value="GPC_filovir-type_extra_dom"/>
</dbReference>
<dbReference type="Pfam" id="PF01611">
    <property type="entry name" value="Filo_glycop"/>
    <property type="match status" value="1"/>
</dbReference>
<dbReference type="PIRSF" id="PIRSF036874">
    <property type="entry name" value="GPC_FiloV"/>
    <property type="match status" value="1"/>
</dbReference>
<keyword id="KW-0165">Cleavage on pair of basic residues</keyword>
<keyword id="KW-1015">Disulfide bond</keyword>
<keyword id="KW-0325">Glycoprotein</keyword>
<keyword id="KW-0407">Ion channel</keyword>
<keyword id="KW-0406">Ion transport</keyword>
<keyword id="KW-0691">RNA editing</keyword>
<keyword id="KW-0964">Secreted</keyword>
<keyword id="KW-0732">Signal</keyword>
<keyword id="KW-0813">Transport</keyword>
<keyword id="KW-1182">Viral ion channel</keyword>
<proteinExistence type="inferred from homology"/>